<gene>
    <name evidence="1" type="primary">panB</name>
    <name type="ordered locus">Ecok1_01260</name>
    <name type="ORF">APECO1_1851</name>
</gene>
<proteinExistence type="inferred from homology"/>
<keyword id="KW-0963">Cytoplasm</keyword>
<keyword id="KW-0460">Magnesium</keyword>
<keyword id="KW-0479">Metal-binding</keyword>
<keyword id="KW-0566">Pantothenate biosynthesis</keyword>
<keyword id="KW-1185">Reference proteome</keyword>
<keyword id="KW-0808">Transferase</keyword>
<accession>A1A7I0</accession>
<name>PANB_ECOK1</name>
<feature type="chain" id="PRO_0000297265" description="3-methyl-2-oxobutanoate hydroxymethyltransferase">
    <location>
        <begin position="1"/>
        <end position="264"/>
    </location>
</feature>
<feature type="active site" description="Proton acceptor" evidence="1">
    <location>
        <position position="181"/>
    </location>
</feature>
<feature type="binding site" evidence="1">
    <location>
        <begin position="45"/>
        <end position="46"/>
    </location>
    <ligand>
        <name>3-methyl-2-oxobutanoate</name>
        <dbReference type="ChEBI" id="CHEBI:11851"/>
    </ligand>
</feature>
<feature type="binding site" evidence="1">
    <location>
        <position position="45"/>
    </location>
    <ligand>
        <name>Mg(2+)</name>
        <dbReference type="ChEBI" id="CHEBI:18420"/>
    </ligand>
</feature>
<feature type="binding site" evidence="1">
    <location>
        <position position="84"/>
    </location>
    <ligand>
        <name>3-methyl-2-oxobutanoate</name>
        <dbReference type="ChEBI" id="CHEBI:11851"/>
    </ligand>
</feature>
<feature type="binding site" evidence="1">
    <location>
        <position position="84"/>
    </location>
    <ligand>
        <name>Mg(2+)</name>
        <dbReference type="ChEBI" id="CHEBI:18420"/>
    </ligand>
</feature>
<feature type="binding site" evidence="1">
    <location>
        <position position="112"/>
    </location>
    <ligand>
        <name>3-methyl-2-oxobutanoate</name>
        <dbReference type="ChEBI" id="CHEBI:11851"/>
    </ligand>
</feature>
<feature type="binding site" evidence="1">
    <location>
        <position position="114"/>
    </location>
    <ligand>
        <name>Mg(2+)</name>
        <dbReference type="ChEBI" id="CHEBI:18420"/>
    </ligand>
</feature>
<sequence>MKPTTIASLQKCKQDKKRFATITAYDYSFAKLFAEEGLNVMLVGDSLGMTVQGHDSTLPVTVADIAYHTAAVRRGAPNCLLLADLPFMAYATPEQAFENAATVMRAGANMVKIEGGEWLVETVQMLTERAVPVCGHLGLTPQSVNIFGGYKVQGRGDEAGDRLLSDALALEAAGAQLLVLECVPVELAKRITEALAIPVIGIGAGNVTDGQILVMHDAFGITGGHIPKFAKNFLAETGDIRAAVRQYMAEVESGVYPGEEHSFH</sequence>
<organism>
    <name type="scientific">Escherichia coli O1:K1 / APEC</name>
    <dbReference type="NCBI Taxonomy" id="405955"/>
    <lineage>
        <taxon>Bacteria</taxon>
        <taxon>Pseudomonadati</taxon>
        <taxon>Pseudomonadota</taxon>
        <taxon>Gammaproteobacteria</taxon>
        <taxon>Enterobacterales</taxon>
        <taxon>Enterobacteriaceae</taxon>
        <taxon>Escherichia</taxon>
    </lineage>
</organism>
<comment type="function">
    <text evidence="1">Catalyzes the reversible reaction in which hydroxymethyl group from 5,10-methylenetetrahydrofolate is transferred onto alpha-ketoisovalerate to form ketopantoate.</text>
</comment>
<comment type="catalytic activity">
    <reaction evidence="1">
        <text>3-methyl-2-oxobutanoate + (6R)-5,10-methylene-5,6,7,8-tetrahydrofolate + H2O = 2-dehydropantoate + (6S)-5,6,7,8-tetrahydrofolate</text>
        <dbReference type="Rhea" id="RHEA:11824"/>
        <dbReference type="ChEBI" id="CHEBI:11561"/>
        <dbReference type="ChEBI" id="CHEBI:11851"/>
        <dbReference type="ChEBI" id="CHEBI:15377"/>
        <dbReference type="ChEBI" id="CHEBI:15636"/>
        <dbReference type="ChEBI" id="CHEBI:57453"/>
        <dbReference type="EC" id="2.1.2.11"/>
    </reaction>
</comment>
<comment type="cofactor">
    <cofactor evidence="1">
        <name>Mg(2+)</name>
        <dbReference type="ChEBI" id="CHEBI:18420"/>
    </cofactor>
    <text evidence="1">Binds 1 Mg(2+) ion per subunit.</text>
</comment>
<comment type="pathway">
    <text evidence="1">Cofactor biosynthesis; (R)-pantothenate biosynthesis; (R)-pantoate from 3-methyl-2-oxobutanoate: step 1/2.</text>
</comment>
<comment type="subunit">
    <text evidence="1">Homodecamer; pentamer of dimers.</text>
</comment>
<comment type="subcellular location">
    <subcellularLocation>
        <location evidence="1">Cytoplasm</location>
    </subcellularLocation>
</comment>
<comment type="similarity">
    <text evidence="1">Belongs to the PanB family.</text>
</comment>
<dbReference type="EC" id="2.1.2.11" evidence="1"/>
<dbReference type="EMBL" id="CP000468">
    <property type="protein sequence ID" value="ABI99619.1"/>
    <property type="molecule type" value="Genomic_DNA"/>
</dbReference>
<dbReference type="RefSeq" id="WP_000805462.1">
    <property type="nucleotide sequence ID" value="NZ_CADILS010000047.1"/>
</dbReference>
<dbReference type="SMR" id="A1A7I0"/>
<dbReference type="KEGG" id="ecv:APECO1_1851"/>
<dbReference type="HOGENOM" id="CLU_036645_1_0_6"/>
<dbReference type="UniPathway" id="UPA00028">
    <property type="reaction ID" value="UER00003"/>
</dbReference>
<dbReference type="Proteomes" id="UP000008216">
    <property type="component" value="Chromosome"/>
</dbReference>
<dbReference type="GO" id="GO:0005737">
    <property type="term" value="C:cytoplasm"/>
    <property type="evidence" value="ECO:0007669"/>
    <property type="project" value="UniProtKB-SubCell"/>
</dbReference>
<dbReference type="GO" id="GO:0003864">
    <property type="term" value="F:3-methyl-2-oxobutanoate hydroxymethyltransferase activity"/>
    <property type="evidence" value="ECO:0007669"/>
    <property type="project" value="UniProtKB-UniRule"/>
</dbReference>
<dbReference type="GO" id="GO:0000287">
    <property type="term" value="F:magnesium ion binding"/>
    <property type="evidence" value="ECO:0007669"/>
    <property type="project" value="TreeGrafter"/>
</dbReference>
<dbReference type="GO" id="GO:0015940">
    <property type="term" value="P:pantothenate biosynthetic process"/>
    <property type="evidence" value="ECO:0007669"/>
    <property type="project" value="UniProtKB-UniRule"/>
</dbReference>
<dbReference type="CDD" id="cd06557">
    <property type="entry name" value="KPHMT-like"/>
    <property type="match status" value="1"/>
</dbReference>
<dbReference type="FunFam" id="3.20.20.60:FF:000003">
    <property type="entry name" value="3-methyl-2-oxobutanoate hydroxymethyltransferase"/>
    <property type="match status" value="1"/>
</dbReference>
<dbReference type="Gene3D" id="3.20.20.60">
    <property type="entry name" value="Phosphoenolpyruvate-binding domains"/>
    <property type="match status" value="1"/>
</dbReference>
<dbReference type="HAMAP" id="MF_00156">
    <property type="entry name" value="PanB"/>
    <property type="match status" value="1"/>
</dbReference>
<dbReference type="InterPro" id="IPR003700">
    <property type="entry name" value="Pantoate_hydroxy_MeTrfase"/>
</dbReference>
<dbReference type="InterPro" id="IPR015813">
    <property type="entry name" value="Pyrv/PenolPyrv_kinase-like_dom"/>
</dbReference>
<dbReference type="InterPro" id="IPR040442">
    <property type="entry name" value="Pyrv_kinase-like_dom_sf"/>
</dbReference>
<dbReference type="NCBIfam" id="TIGR00222">
    <property type="entry name" value="panB"/>
    <property type="match status" value="1"/>
</dbReference>
<dbReference type="NCBIfam" id="NF001452">
    <property type="entry name" value="PRK00311.1"/>
    <property type="match status" value="1"/>
</dbReference>
<dbReference type="PANTHER" id="PTHR20881">
    <property type="entry name" value="3-METHYL-2-OXOBUTANOATE HYDROXYMETHYLTRANSFERASE"/>
    <property type="match status" value="1"/>
</dbReference>
<dbReference type="PANTHER" id="PTHR20881:SF0">
    <property type="entry name" value="3-METHYL-2-OXOBUTANOATE HYDROXYMETHYLTRANSFERASE"/>
    <property type="match status" value="1"/>
</dbReference>
<dbReference type="Pfam" id="PF02548">
    <property type="entry name" value="Pantoate_transf"/>
    <property type="match status" value="1"/>
</dbReference>
<dbReference type="PIRSF" id="PIRSF000388">
    <property type="entry name" value="Pantoate_hydroxy_MeTrfase"/>
    <property type="match status" value="1"/>
</dbReference>
<dbReference type="SUPFAM" id="SSF51621">
    <property type="entry name" value="Phosphoenolpyruvate/pyruvate domain"/>
    <property type="match status" value="1"/>
</dbReference>
<protein>
    <recommendedName>
        <fullName evidence="1">3-methyl-2-oxobutanoate hydroxymethyltransferase</fullName>
        <ecNumber evidence="1">2.1.2.11</ecNumber>
    </recommendedName>
    <alternativeName>
        <fullName evidence="1">Ketopantoate hydroxymethyltransferase</fullName>
        <shortName evidence="1">KPHMT</shortName>
    </alternativeName>
</protein>
<evidence type="ECO:0000255" key="1">
    <source>
        <dbReference type="HAMAP-Rule" id="MF_00156"/>
    </source>
</evidence>
<reference key="1">
    <citation type="journal article" date="2007" name="J. Bacteriol.">
        <title>The genome sequence of avian pathogenic Escherichia coli strain O1:K1:H7 shares strong similarities with human extraintestinal pathogenic E. coli genomes.</title>
        <authorList>
            <person name="Johnson T.J."/>
            <person name="Kariyawasam S."/>
            <person name="Wannemuehler Y."/>
            <person name="Mangiamele P."/>
            <person name="Johnson S.J."/>
            <person name="Doetkott C."/>
            <person name="Skyberg J.A."/>
            <person name="Lynne A.M."/>
            <person name="Johnson J.R."/>
            <person name="Nolan L.K."/>
        </authorList>
    </citation>
    <scope>NUCLEOTIDE SEQUENCE [LARGE SCALE GENOMIC DNA]</scope>
</reference>